<dbReference type="EC" id="3.5.1.47" evidence="1"/>
<dbReference type="EMBL" id="CP000387">
    <property type="protein sequence ID" value="ABN45539.1"/>
    <property type="molecule type" value="Genomic_DNA"/>
</dbReference>
<dbReference type="RefSeq" id="WP_011837594.1">
    <property type="nucleotide sequence ID" value="NC_009009.1"/>
</dbReference>
<dbReference type="RefSeq" id="YP_001036089.1">
    <property type="nucleotide sequence ID" value="NC_009009.1"/>
</dbReference>
<dbReference type="SMR" id="A3CQT4"/>
<dbReference type="STRING" id="388919.SSA_2173"/>
<dbReference type="KEGG" id="ssa:SSA_2173"/>
<dbReference type="PATRIC" id="fig|388919.9.peg.2058"/>
<dbReference type="eggNOG" id="COG1473">
    <property type="taxonomic scope" value="Bacteria"/>
</dbReference>
<dbReference type="HOGENOM" id="CLU_023257_0_1_9"/>
<dbReference type="OrthoDB" id="9776731at2"/>
<dbReference type="UniPathway" id="UPA00034">
    <property type="reaction ID" value="UER00024"/>
</dbReference>
<dbReference type="Proteomes" id="UP000002148">
    <property type="component" value="Chromosome"/>
</dbReference>
<dbReference type="GO" id="GO:0050118">
    <property type="term" value="F:N-acetyldiaminopimelate deacetylase activity"/>
    <property type="evidence" value="ECO:0007669"/>
    <property type="project" value="UniProtKB-UniRule"/>
</dbReference>
<dbReference type="GO" id="GO:0019877">
    <property type="term" value="P:diaminopimelate biosynthetic process"/>
    <property type="evidence" value="ECO:0007669"/>
    <property type="project" value="UniProtKB-UniRule"/>
</dbReference>
<dbReference type="GO" id="GO:0009089">
    <property type="term" value="P:lysine biosynthetic process via diaminopimelate"/>
    <property type="evidence" value="ECO:0007669"/>
    <property type="project" value="UniProtKB-UniRule"/>
</dbReference>
<dbReference type="CDD" id="cd05670">
    <property type="entry name" value="M20_Acy1_YkuR-like"/>
    <property type="match status" value="1"/>
</dbReference>
<dbReference type="FunFam" id="3.30.70.360:FF:000001">
    <property type="entry name" value="N-acetyldiaminopimelate deacetylase"/>
    <property type="match status" value="1"/>
</dbReference>
<dbReference type="Gene3D" id="3.30.70.360">
    <property type="match status" value="1"/>
</dbReference>
<dbReference type="Gene3D" id="3.40.630.10">
    <property type="entry name" value="Zn peptidases"/>
    <property type="match status" value="1"/>
</dbReference>
<dbReference type="HAMAP" id="MF_01692">
    <property type="entry name" value="DapEL"/>
    <property type="match status" value="1"/>
</dbReference>
<dbReference type="InterPro" id="IPR023905">
    <property type="entry name" value="AcetylDAP_deacetylase"/>
</dbReference>
<dbReference type="InterPro" id="IPR017439">
    <property type="entry name" value="Amidohydrolase"/>
</dbReference>
<dbReference type="InterPro" id="IPR036264">
    <property type="entry name" value="Bact_exopeptidase_dim_dom"/>
</dbReference>
<dbReference type="InterPro" id="IPR002933">
    <property type="entry name" value="Peptidase_M20"/>
</dbReference>
<dbReference type="InterPro" id="IPR011650">
    <property type="entry name" value="Peptidase_M20_dimer"/>
</dbReference>
<dbReference type="NCBIfam" id="TIGR01891">
    <property type="entry name" value="amidohydrolases"/>
    <property type="match status" value="1"/>
</dbReference>
<dbReference type="PANTHER" id="PTHR11014:SF98">
    <property type="entry name" value="N-ACETYLDIAMINOPIMELATE DEACETYLASE"/>
    <property type="match status" value="1"/>
</dbReference>
<dbReference type="PANTHER" id="PTHR11014">
    <property type="entry name" value="PEPTIDASE M20 FAMILY MEMBER"/>
    <property type="match status" value="1"/>
</dbReference>
<dbReference type="Pfam" id="PF07687">
    <property type="entry name" value="M20_dimer"/>
    <property type="match status" value="1"/>
</dbReference>
<dbReference type="Pfam" id="PF01546">
    <property type="entry name" value="Peptidase_M20"/>
    <property type="match status" value="1"/>
</dbReference>
<dbReference type="PIRSF" id="PIRSF005962">
    <property type="entry name" value="Pept_M20D_amidohydro"/>
    <property type="match status" value="1"/>
</dbReference>
<dbReference type="SUPFAM" id="SSF55031">
    <property type="entry name" value="Bacterial exopeptidase dimerisation domain"/>
    <property type="match status" value="1"/>
</dbReference>
<dbReference type="SUPFAM" id="SSF53187">
    <property type="entry name" value="Zn-dependent exopeptidases"/>
    <property type="match status" value="1"/>
</dbReference>
<organism>
    <name type="scientific">Streptococcus sanguinis (strain SK36)</name>
    <dbReference type="NCBI Taxonomy" id="388919"/>
    <lineage>
        <taxon>Bacteria</taxon>
        <taxon>Bacillati</taxon>
        <taxon>Bacillota</taxon>
        <taxon>Bacilli</taxon>
        <taxon>Lactobacillales</taxon>
        <taxon>Streptococcaceae</taxon>
        <taxon>Streptococcus</taxon>
    </lineage>
</organism>
<protein>
    <recommendedName>
        <fullName evidence="1">N-acetyldiaminopimelate deacetylase</fullName>
        <ecNumber evidence="1">3.5.1.47</ecNumber>
    </recommendedName>
</protein>
<gene>
    <name type="ordered locus">SSA_2173</name>
</gene>
<comment type="function">
    <text evidence="1">Catalyzes the conversion of N-acetyl-diaminopimelate to diaminopimelate and acetate.</text>
</comment>
<comment type="catalytic activity">
    <reaction evidence="1">
        <text>N-acetyl-(2S,6S)-2,6-diaminopimelate + H2O = (2S,6S)-2,6-diaminopimelate + acetate</text>
        <dbReference type="Rhea" id="RHEA:20405"/>
        <dbReference type="ChEBI" id="CHEBI:15377"/>
        <dbReference type="ChEBI" id="CHEBI:30089"/>
        <dbReference type="ChEBI" id="CHEBI:57609"/>
        <dbReference type="ChEBI" id="CHEBI:58767"/>
        <dbReference type="EC" id="3.5.1.47"/>
    </reaction>
</comment>
<comment type="pathway">
    <text evidence="1">Amino-acid biosynthesis; L-lysine biosynthesis via DAP pathway; LL-2,6-diaminopimelate from (S)-tetrahydrodipicolinate (acetylase route): step 3/3.</text>
</comment>
<comment type="similarity">
    <text evidence="1">Belongs to the peptidase M20A family. N-acetyldiaminopimelate deacetylase subfamily.</text>
</comment>
<feature type="chain" id="PRO_0000376789" description="N-acetyldiaminopimelate deacetylase">
    <location>
        <begin position="1"/>
        <end position="377"/>
    </location>
</feature>
<feature type="active site" evidence="1">
    <location>
        <position position="69"/>
    </location>
</feature>
<feature type="active site" description="Proton acceptor" evidence="1">
    <location>
        <position position="128"/>
    </location>
</feature>
<sequence length="377" mass="41864">MLDYLNIRRDLHQIPEIGLEEYKTHAYLMQVIDGLTAGLDFVEIRTWRTGILVFIKGSSPDKTIGWRTDIDGLPIVEDTGLDFASTHEGRMHACGHDMHMTVALGLLEQAVSTQPTHNLLFLFQPAEENEAGGMLMYEDGAFGDWLPDEFYGLHVRPDLKVGDIATNRGTLFAGTCEVKLTFKGKGGHAAFPHEANDALVAASYFITQVQTIVSRNVDPIEGAVVTFGSLHAGTTNNVIAETAFLHGTIRTLTQEMNLLTQKRLREIAEGLAQSFGLELDLELKQGGYLPVENHPDLADELMDFFQKEEGVQLIDIEPAMTGEDFGYLLSKVKGVMFWLGVDSPYALHHPKMTPDEAALPFAIEKIGKFLDYKINER</sequence>
<proteinExistence type="inferred from homology"/>
<name>DAPEL_STRSV</name>
<reference key="1">
    <citation type="journal article" date="2007" name="J. Bacteriol.">
        <title>Genome of the opportunistic pathogen Streptococcus sanguinis.</title>
        <authorList>
            <person name="Xu P."/>
            <person name="Alves J.M."/>
            <person name="Kitten T."/>
            <person name="Brown A."/>
            <person name="Chen Z."/>
            <person name="Ozaki L.S."/>
            <person name="Manque P."/>
            <person name="Ge X."/>
            <person name="Serrano M.G."/>
            <person name="Puiu D."/>
            <person name="Hendricks S."/>
            <person name="Wang Y."/>
            <person name="Chaplin M.D."/>
            <person name="Akan D."/>
            <person name="Paik S."/>
            <person name="Peterson D.L."/>
            <person name="Macrina F.L."/>
            <person name="Buck G.A."/>
        </authorList>
    </citation>
    <scope>NUCLEOTIDE SEQUENCE [LARGE SCALE GENOMIC DNA]</scope>
    <source>
        <strain>SK36</strain>
    </source>
</reference>
<evidence type="ECO:0000255" key="1">
    <source>
        <dbReference type="HAMAP-Rule" id="MF_01692"/>
    </source>
</evidence>
<accession>A3CQT4</accession>
<keyword id="KW-0028">Amino-acid biosynthesis</keyword>
<keyword id="KW-0220">Diaminopimelate biosynthesis</keyword>
<keyword id="KW-0378">Hydrolase</keyword>
<keyword id="KW-0457">Lysine biosynthesis</keyword>
<keyword id="KW-1185">Reference proteome</keyword>